<dbReference type="EMBL" id="Z22517">
    <property type="protein sequence ID" value="CAA80243.1"/>
    <property type="molecule type" value="Genomic_DNA"/>
</dbReference>
<dbReference type="EMBL" id="Z46607">
    <property type="protein sequence ID" value="CAA86574.1"/>
    <property type="molecule type" value="Genomic_DNA"/>
</dbReference>
<dbReference type="EMBL" id="BA000040">
    <property type="protein sequence ID" value="BAC48391.1"/>
    <property type="molecule type" value="Genomic_DNA"/>
</dbReference>
<dbReference type="PIR" id="S54745">
    <property type="entry name" value="S54745"/>
</dbReference>
<dbReference type="RefSeq" id="NP_769766.1">
    <property type="nucleotide sequence ID" value="NC_004463.1"/>
</dbReference>
<dbReference type="RefSeq" id="WP_011085910.1">
    <property type="nucleotide sequence ID" value="NC_004463.1"/>
</dbReference>
<dbReference type="SMR" id="P45401"/>
<dbReference type="FunCoup" id="P45401">
    <property type="interactions" value="54"/>
</dbReference>
<dbReference type="STRING" id="224911.AAV28_12655"/>
<dbReference type="EnsemblBacteria" id="BAC48391">
    <property type="protein sequence ID" value="BAC48391"/>
    <property type="gene ID" value="BAC48391"/>
</dbReference>
<dbReference type="GeneID" id="46490164"/>
<dbReference type="KEGG" id="bja:blr3126"/>
<dbReference type="PATRIC" id="fig|224911.44.peg.2759"/>
<dbReference type="eggNOG" id="COG2332">
    <property type="taxonomic scope" value="Bacteria"/>
</dbReference>
<dbReference type="HOGENOM" id="CLU_079503_1_1_5"/>
<dbReference type="InParanoid" id="P45401"/>
<dbReference type="OrthoDB" id="9793584at2"/>
<dbReference type="PhylomeDB" id="P45401"/>
<dbReference type="Proteomes" id="UP000002526">
    <property type="component" value="Chromosome"/>
</dbReference>
<dbReference type="GO" id="GO:0005886">
    <property type="term" value="C:plasma membrane"/>
    <property type="evidence" value="ECO:0007669"/>
    <property type="project" value="UniProtKB-SubCell"/>
</dbReference>
<dbReference type="GO" id="GO:0020037">
    <property type="term" value="F:heme binding"/>
    <property type="evidence" value="ECO:0007669"/>
    <property type="project" value="InterPro"/>
</dbReference>
<dbReference type="GO" id="GO:0046872">
    <property type="term" value="F:metal ion binding"/>
    <property type="evidence" value="ECO:0007669"/>
    <property type="project" value="UniProtKB-KW"/>
</dbReference>
<dbReference type="GO" id="GO:0017004">
    <property type="term" value="P:cytochrome complex assembly"/>
    <property type="evidence" value="ECO:0007669"/>
    <property type="project" value="UniProtKB-KW"/>
</dbReference>
<dbReference type="FunFam" id="2.40.50.140:FF:000104">
    <property type="entry name" value="Cytochrome c-type biogenesis protein CcmE"/>
    <property type="match status" value="1"/>
</dbReference>
<dbReference type="Gene3D" id="2.40.50.140">
    <property type="entry name" value="Nucleic acid-binding proteins"/>
    <property type="match status" value="1"/>
</dbReference>
<dbReference type="HAMAP" id="MF_01959">
    <property type="entry name" value="CcmE"/>
    <property type="match status" value="1"/>
</dbReference>
<dbReference type="InterPro" id="IPR004329">
    <property type="entry name" value="CcmE"/>
</dbReference>
<dbReference type="InterPro" id="IPR036127">
    <property type="entry name" value="CcmE-like_sf"/>
</dbReference>
<dbReference type="InterPro" id="IPR012340">
    <property type="entry name" value="NA-bd_OB-fold"/>
</dbReference>
<dbReference type="NCBIfam" id="NF009727">
    <property type="entry name" value="PRK13254.1-1"/>
    <property type="match status" value="1"/>
</dbReference>
<dbReference type="NCBIfam" id="NF009729">
    <property type="entry name" value="PRK13254.1-3"/>
    <property type="match status" value="1"/>
</dbReference>
<dbReference type="NCBIfam" id="NF009731">
    <property type="entry name" value="PRK13254.1-5"/>
    <property type="match status" value="1"/>
</dbReference>
<dbReference type="PANTHER" id="PTHR34128">
    <property type="entry name" value="CYTOCHROME C-TYPE BIOGENESIS PROTEIN CCME HOMOLOG, MITOCHONDRIAL"/>
    <property type="match status" value="1"/>
</dbReference>
<dbReference type="PANTHER" id="PTHR34128:SF2">
    <property type="entry name" value="CYTOCHROME C-TYPE BIOGENESIS PROTEIN CCME HOMOLOG, MITOCHONDRIAL"/>
    <property type="match status" value="1"/>
</dbReference>
<dbReference type="Pfam" id="PF03100">
    <property type="entry name" value="CcmE"/>
    <property type="match status" value="1"/>
</dbReference>
<dbReference type="SUPFAM" id="SSF82093">
    <property type="entry name" value="Heme chaperone CcmE"/>
    <property type="match status" value="1"/>
</dbReference>
<reference key="1">
    <citation type="journal article" date="1995" name="Mol. Gen. Genet.">
        <title>The cycHJKL gene cluster plays an essential role in the biogenesis of c-type cytochromes in Bradyrhizobium japonicum.</title>
        <authorList>
            <person name="Ritz D."/>
            <person name="Thoeny-Meyer L."/>
            <person name="Hennecke H."/>
        </authorList>
    </citation>
    <scope>NUCLEOTIDE SEQUENCE [GENOMIC DNA]</scope>
    <source>
        <strain>USDA 110spc4</strain>
    </source>
</reference>
<reference key="2">
    <citation type="journal article" date="2002" name="DNA Res.">
        <title>Complete genomic sequence of nitrogen-fixing symbiotic bacterium Bradyrhizobium japonicum USDA110.</title>
        <authorList>
            <person name="Kaneko T."/>
            <person name="Nakamura Y."/>
            <person name="Sato S."/>
            <person name="Minamisawa K."/>
            <person name="Uchiumi T."/>
            <person name="Sasamoto S."/>
            <person name="Watanabe A."/>
            <person name="Idesawa K."/>
            <person name="Iriguchi M."/>
            <person name="Kawashima K."/>
            <person name="Kohara M."/>
            <person name="Matsumoto M."/>
            <person name="Shimpo S."/>
            <person name="Tsuruoka H."/>
            <person name="Wada T."/>
            <person name="Yamada M."/>
            <person name="Tabata S."/>
        </authorList>
    </citation>
    <scope>NUCLEOTIDE SEQUENCE [LARGE SCALE GENOMIC DNA]</scope>
    <source>
        <strain>JCM 10833 / BCRC 13528 / IAM 13628 / NBRC 14792 / USDA 110</strain>
    </source>
</reference>
<keyword id="KW-0997">Cell inner membrane</keyword>
<keyword id="KW-1003">Cell membrane</keyword>
<keyword id="KW-0201">Cytochrome c-type biogenesis</keyword>
<keyword id="KW-0349">Heme</keyword>
<keyword id="KW-0408">Iron</keyword>
<keyword id="KW-0472">Membrane</keyword>
<keyword id="KW-0479">Metal-binding</keyword>
<keyword id="KW-1185">Reference proteome</keyword>
<keyword id="KW-0735">Signal-anchor</keyword>
<keyword id="KW-0812">Transmembrane</keyword>
<keyword id="KW-1133">Transmembrane helix</keyword>
<organism>
    <name type="scientific">Bradyrhizobium diazoefficiens (strain JCM 10833 / BCRC 13528 / IAM 13628 / NBRC 14792 / USDA 110)</name>
    <dbReference type="NCBI Taxonomy" id="224911"/>
    <lineage>
        <taxon>Bacteria</taxon>
        <taxon>Pseudomonadati</taxon>
        <taxon>Pseudomonadota</taxon>
        <taxon>Alphaproteobacteria</taxon>
        <taxon>Hyphomicrobiales</taxon>
        <taxon>Nitrobacteraceae</taxon>
        <taxon>Bradyrhizobium</taxon>
    </lineage>
</organism>
<proteinExistence type="inferred from homology"/>
<name>CCME_BRADU</name>
<comment type="function">
    <text evidence="1">Heme chaperone required for the biogenesis of c-type cytochromes. Transiently binds heme delivered by CcmC and transfers the heme to apo-cytochromes in a process facilitated by CcmF and CcmH.</text>
</comment>
<comment type="subcellular location">
    <subcellularLocation>
        <location evidence="1">Cell inner membrane</location>
        <topology evidence="1">Single-pass type II membrane protein</topology>
        <orientation evidence="1">Periplasmic side</orientation>
    </subcellularLocation>
</comment>
<comment type="similarity">
    <text evidence="1">Belongs to the CcmE/CycJ family.</text>
</comment>
<gene>
    <name evidence="1" type="primary">ccmE</name>
    <name evidence="1" type="synonym">cycJ</name>
    <name type="ordered locus">blr3126</name>
</gene>
<accession>P45401</accession>
<sequence length="169" mass="17857">MTRKQRRMTIIGGSLAVLALAAALVLNALRDSIVFFSTPTMVAEKHVQAGKRFRLGGLVQPGSLQRGDNLAVSFEVADGNAKLPVAYKGILPDLFREGQGVVAEGALDANGVFKADTVLAKHDETYMPKDVADALKKQGHWKDDYGGKASDGVKPAATTAQGNPQGAVR</sequence>
<evidence type="ECO:0000255" key="1">
    <source>
        <dbReference type="HAMAP-Rule" id="MF_01959"/>
    </source>
</evidence>
<evidence type="ECO:0000256" key="2">
    <source>
        <dbReference type="SAM" id="MobiDB-lite"/>
    </source>
</evidence>
<protein>
    <recommendedName>
        <fullName evidence="1">Cytochrome c-type biogenesis protein CcmE</fullName>
    </recommendedName>
    <alternativeName>
        <fullName evidence="1">Cytochrome c maturation protein E</fullName>
    </alternativeName>
    <alternativeName>
        <fullName evidence="1">Heme chaperone CcmE</fullName>
    </alternativeName>
</protein>
<feature type="chain" id="PRO_0000201580" description="Cytochrome c-type biogenesis protein CcmE">
    <location>
        <begin position="1"/>
        <end position="169"/>
    </location>
</feature>
<feature type="topological domain" description="Cytoplasmic" evidence="1">
    <location>
        <begin position="1"/>
        <end position="7"/>
    </location>
</feature>
<feature type="transmembrane region" description="Helical; Signal-anchor for type II membrane protein" evidence="1">
    <location>
        <begin position="8"/>
        <end position="28"/>
    </location>
</feature>
<feature type="topological domain" description="Periplasmic" evidence="1">
    <location>
        <begin position="29"/>
        <end position="169"/>
    </location>
</feature>
<feature type="region of interest" description="Disordered" evidence="2">
    <location>
        <begin position="143"/>
        <end position="169"/>
    </location>
</feature>
<feature type="compositionally biased region" description="Polar residues" evidence="2">
    <location>
        <begin position="158"/>
        <end position="169"/>
    </location>
</feature>
<feature type="binding site" description="covalent" evidence="1">
    <location>
        <position position="122"/>
    </location>
    <ligand>
        <name>heme</name>
        <dbReference type="ChEBI" id="CHEBI:30413"/>
    </ligand>
</feature>
<feature type="binding site" description="axial binding residue" evidence="1">
    <location>
        <position position="126"/>
    </location>
    <ligand>
        <name>heme</name>
        <dbReference type="ChEBI" id="CHEBI:30413"/>
    </ligand>
    <ligandPart>
        <name>Fe</name>
        <dbReference type="ChEBI" id="CHEBI:18248"/>
    </ligandPart>
</feature>